<dbReference type="EMBL" id="CP000915">
    <property type="protein sequence ID" value="ACD30742.1"/>
    <property type="molecule type" value="Genomic_DNA"/>
</dbReference>
<dbReference type="SMR" id="B2SG84"/>
<dbReference type="KEGG" id="ftm:FTM_0777"/>
<dbReference type="HOGENOM" id="CLU_040267_0_0_6"/>
<dbReference type="GO" id="GO:0005737">
    <property type="term" value="C:cytoplasm"/>
    <property type="evidence" value="ECO:0007669"/>
    <property type="project" value="UniProtKB-SubCell"/>
</dbReference>
<dbReference type="GO" id="GO:0005524">
    <property type="term" value="F:ATP binding"/>
    <property type="evidence" value="ECO:0007669"/>
    <property type="project" value="UniProtKB-UniRule"/>
</dbReference>
<dbReference type="GO" id="GO:0003697">
    <property type="term" value="F:single-stranded DNA binding"/>
    <property type="evidence" value="ECO:0007669"/>
    <property type="project" value="UniProtKB-UniRule"/>
</dbReference>
<dbReference type="GO" id="GO:0006260">
    <property type="term" value="P:DNA replication"/>
    <property type="evidence" value="ECO:0007669"/>
    <property type="project" value="UniProtKB-UniRule"/>
</dbReference>
<dbReference type="GO" id="GO:0000731">
    <property type="term" value="P:DNA synthesis involved in DNA repair"/>
    <property type="evidence" value="ECO:0007669"/>
    <property type="project" value="TreeGrafter"/>
</dbReference>
<dbReference type="GO" id="GO:0006302">
    <property type="term" value="P:double-strand break repair"/>
    <property type="evidence" value="ECO:0007669"/>
    <property type="project" value="TreeGrafter"/>
</dbReference>
<dbReference type="GO" id="GO:0009432">
    <property type="term" value="P:SOS response"/>
    <property type="evidence" value="ECO:0007669"/>
    <property type="project" value="UniProtKB-UniRule"/>
</dbReference>
<dbReference type="Gene3D" id="3.40.50.300">
    <property type="entry name" value="P-loop containing nucleotide triphosphate hydrolases"/>
    <property type="match status" value="1"/>
</dbReference>
<dbReference type="Gene3D" id="1.20.1050.90">
    <property type="entry name" value="RecF/RecN/SMC, N-terminal domain"/>
    <property type="match status" value="1"/>
</dbReference>
<dbReference type="HAMAP" id="MF_00365">
    <property type="entry name" value="RecF"/>
    <property type="match status" value="1"/>
</dbReference>
<dbReference type="InterPro" id="IPR001238">
    <property type="entry name" value="DNA-binding_RecF"/>
</dbReference>
<dbReference type="InterPro" id="IPR018078">
    <property type="entry name" value="DNA-binding_RecF_CS"/>
</dbReference>
<dbReference type="InterPro" id="IPR027417">
    <property type="entry name" value="P-loop_NTPase"/>
</dbReference>
<dbReference type="InterPro" id="IPR003395">
    <property type="entry name" value="RecF/RecN/SMC_N"/>
</dbReference>
<dbReference type="InterPro" id="IPR042174">
    <property type="entry name" value="RecF_2"/>
</dbReference>
<dbReference type="NCBIfam" id="TIGR00611">
    <property type="entry name" value="recf"/>
    <property type="match status" value="1"/>
</dbReference>
<dbReference type="PANTHER" id="PTHR32182">
    <property type="entry name" value="DNA REPLICATION AND REPAIR PROTEIN RECF"/>
    <property type="match status" value="1"/>
</dbReference>
<dbReference type="PANTHER" id="PTHR32182:SF0">
    <property type="entry name" value="DNA REPLICATION AND REPAIR PROTEIN RECF"/>
    <property type="match status" value="1"/>
</dbReference>
<dbReference type="Pfam" id="PF02463">
    <property type="entry name" value="SMC_N"/>
    <property type="match status" value="1"/>
</dbReference>
<dbReference type="SUPFAM" id="SSF52540">
    <property type="entry name" value="P-loop containing nucleoside triphosphate hydrolases"/>
    <property type="match status" value="1"/>
</dbReference>
<dbReference type="PROSITE" id="PS00618">
    <property type="entry name" value="RECF_2"/>
    <property type="match status" value="1"/>
</dbReference>
<accession>B2SG84</accession>
<evidence type="ECO:0000255" key="1">
    <source>
        <dbReference type="HAMAP-Rule" id="MF_00365"/>
    </source>
</evidence>
<keyword id="KW-0067">ATP-binding</keyword>
<keyword id="KW-0963">Cytoplasm</keyword>
<keyword id="KW-0227">DNA damage</keyword>
<keyword id="KW-0234">DNA repair</keyword>
<keyword id="KW-0235">DNA replication</keyword>
<keyword id="KW-0238">DNA-binding</keyword>
<keyword id="KW-0547">Nucleotide-binding</keyword>
<keyword id="KW-0742">SOS response</keyword>
<organism>
    <name type="scientific">Francisella tularensis subsp. mediasiatica (strain FSC147)</name>
    <dbReference type="NCBI Taxonomy" id="441952"/>
    <lineage>
        <taxon>Bacteria</taxon>
        <taxon>Pseudomonadati</taxon>
        <taxon>Pseudomonadota</taxon>
        <taxon>Gammaproteobacteria</taxon>
        <taxon>Thiotrichales</taxon>
        <taxon>Francisellaceae</taxon>
        <taxon>Francisella</taxon>
    </lineage>
</organism>
<protein>
    <recommendedName>
        <fullName evidence="1">DNA replication and repair protein RecF</fullName>
    </recommendedName>
</protein>
<reference key="1">
    <citation type="journal article" date="2009" name="PLoS Pathog.">
        <title>Molecular evolutionary consequences of niche restriction in Francisella tularensis, a facultative intracellular pathogen.</title>
        <authorList>
            <person name="Larsson P."/>
            <person name="Elfsmark D."/>
            <person name="Svensson K."/>
            <person name="Wikstroem P."/>
            <person name="Forsman M."/>
            <person name="Brettin T."/>
            <person name="Keim P."/>
            <person name="Johansson A."/>
        </authorList>
    </citation>
    <scope>NUCLEOTIDE SEQUENCE [LARGE SCALE GENOMIC DNA]</scope>
    <source>
        <strain>FSC147</strain>
    </source>
</reference>
<feature type="chain" id="PRO_1000205489" description="DNA replication and repair protein RecF">
    <location>
        <begin position="1"/>
        <end position="349"/>
    </location>
</feature>
<feature type="binding site" evidence="1">
    <location>
        <begin position="30"/>
        <end position="37"/>
    </location>
    <ligand>
        <name>ATP</name>
        <dbReference type="ChEBI" id="CHEBI:30616"/>
    </ligand>
</feature>
<sequence>MYISNLRLQNFRNIHAKSFDFKNSINFIVGKNGSGKTSILESIYFLSHSRSFRSSQLNRIINHNADEFIIYTKAYNPDEITISLSRKKNSNNISKLNLEIQKNHTEITRNLPIQLINPESFNIINSGAQQRCKVLDWGAFYLDKTFLKIWQQTKFLVKQRNSALKQNYPYSYILSIDKKLCEFAEILDYKRQAYFTKLKPKIYEILSHFNPNLQLDIDYFRGWNLHKSLAQVLEESFNYDNKYKVTNHGPHKADIVLSVSHKPIQDIFSRGQQKLLICALKLAQGEIHNSENDNKCIYLIDDITSELDSIHTLTLFNYLKQLKSQVFITTTEKNKINEFIDTNSYILEI</sequence>
<comment type="function">
    <text evidence="1">The RecF protein is involved in DNA metabolism; it is required for DNA replication and normal SOS inducibility. RecF binds preferentially to single-stranded, linear DNA. It also seems to bind ATP.</text>
</comment>
<comment type="subcellular location">
    <subcellularLocation>
        <location evidence="1">Cytoplasm</location>
    </subcellularLocation>
</comment>
<comment type="similarity">
    <text evidence="1">Belongs to the RecF family.</text>
</comment>
<gene>
    <name evidence="1" type="primary">recF</name>
    <name type="ordered locus">FTM_0777</name>
</gene>
<proteinExistence type="inferred from homology"/>
<name>RECF_FRATM</name>